<protein>
    <recommendedName>
        <fullName evidence="1">Chorismate pyruvate-lyase</fullName>
        <shortName evidence="1">CL</shortName>
        <shortName evidence="1">CPL</shortName>
        <ecNumber evidence="1">4.1.3.40</ecNumber>
    </recommendedName>
</protein>
<comment type="function">
    <text evidence="1">Removes the pyruvyl group from chorismate, with concomitant aromatization of the ring, to provide 4-hydroxybenzoate (4HB) for the ubiquinone pathway.</text>
</comment>
<comment type="catalytic activity">
    <reaction evidence="1">
        <text>chorismate = 4-hydroxybenzoate + pyruvate</text>
        <dbReference type="Rhea" id="RHEA:16505"/>
        <dbReference type="ChEBI" id="CHEBI:15361"/>
        <dbReference type="ChEBI" id="CHEBI:17879"/>
        <dbReference type="ChEBI" id="CHEBI:29748"/>
        <dbReference type="EC" id="4.1.3.40"/>
    </reaction>
</comment>
<comment type="pathway">
    <text evidence="1">Cofactor biosynthesis; ubiquinone biosynthesis.</text>
</comment>
<comment type="subunit">
    <text evidence="1">Monomer.</text>
</comment>
<comment type="subcellular location">
    <subcellularLocation>
        <location evidence="1">Cytoplasm</location>
    </subcellularLocation>
</comment>
<comment type="similarity">
    <text evidence="1">Belongs to the UbiC family.</text>
</comment>
<feature type="chain" id="PRO_1000186534" description="Chorismate pyruvate-lyase">
    <location>
        <begin position="1"/>
        <end position="165"/>
    </location>
</feature>
<feature type="binding site" evidence="1">
    <location>
        <position position="35"/>
    </location>
    <ligand>
        <name>substrate</name>
    </ligand>
</feature>
<feature type="binding site" evidence="1">
    <location>
        <position position="77"/>
    </location>
    <ligand>
        <name>substrate</name>
    </ligand>
</feature>
<feature type="binding site" evidence="1">
    <location>
        <position position="115"/>
    </location>
    <ligand>
        <name>substrate</name>
    </ligand>
</feature>
<feature type="binding site" evidence="1">
    <location>
        <position position="156"/>
    </location>
    <ligand>
        <name>substrate</name>
    </ligand>
</feature>
<reference key="1">
    <citation type="journal article" date="2008" name="Genome Res.">
        <title>Comparative genome analysis of Salmonella enteritidis PT4 and Salmonella gallinarum 287/91 provides insights into evolutionary and host adaptation pathways.</title>
        <authorList>
            <person name="Thomson N.R."/>
            <person name="Clayton D.J."/>
            <person name="Windhorst D."/>
            <person name="Vernikos G."/>
            <person name="Davidson S."/>
            <person name="Churcher C."/>
            <person name="Quail M.A."/>
            <person name="Stevens M."/>
            <person name="Jones M.A."/>
            <person name="Watson M."/>
            <person name="Barron A."/>
            <person name="Layton A."/>
            <person name="Pickard D."/>
            <person name="Kingsley R.A."/>
            <person name="Bignell A."/>
            <person name="Clark L."/>
            <person name="Harris B."/>
            <person name="Ormond D."/>
            <person name="Abdellah Z."/>
            <person name="Brooks K."/>
            <person name="Cherevach I."/>
            <person name="Chillingworth T."/>
            <person name="Woodward J."/>
            <person name="Norberczak H."/>
            <person name="Lord A."/>
            <person name="Arrowsmith C."/>
            <person name="Jagels K."/>
            <person name="Moule S."/>
            <person name="Mungall K."/>
            <person name="Saunders M."/>
            <person name="Whitehead S."/>
            <person name="Chabalgoity J.A."/>
            <person name="Maskell D."/>
            <person name="Humphreys T."/>
            <person name="Roberts M."/>
            <person name="Barrow P.A."/>
            <person name="Dougan G."/>
            <person name="Parkhill J."/>
        </authorList>
    </citation>
    <scope>NUCLEOTIDE SEQUENCE [LARGE SCALE GENOMIC DNA]</scope>
    <source>
        <strain>287/91 / NCTC 13346</strain>
    </source>
</reference>
<dbReference type="EC" id="4.1.3.40" evidence="1"/>
<dbReference type="EMBL" id="AM933173">
    <property type="protein sequence ID" value="CAR39845.1"/>
    <property type="molecule type" value="Genomic_DNA"/>
</dbReference>
<dbReference type="RefSeq" id="WP_000019218.1">
    <property type="nucleotide sequence ID" value="NC_011274.1"/>
</dbReference>
<dbReference type="SMR" id="B5R7T2"/>
<dbReference type="KEGG" id="seg:SG4076"/>
<dbReference type="HOGENOM" id="CLU_096824_1_0_6"/>
<dbReference type="UniPathway" id="UPA00232"/>
<dbReference type="Proteomes" id="UP000008321">
    <property type="component" value="Chromosome"/>
</dbReference>
<dbReference type="GO" id="GO:0005829">
    <property type="term" value="C:cytosol"/>
    <property type="evidence" value="ECO:0007669"/>
    <property type="project" value="TreeGrafter"/>
</dbReference>
<dbReference type="GO" id="GO:0008813">
    <property type="term" value="F:chorismate lyase activity"/>
    <property type="evidence" value="ECO:0007669"/>
    <property type="project" value="UniProtKB-UniRule"/>
</dbReference>
<dbReference type="GO" id="GO:0042866">
    <property type="term" value="P:pyruvate biosynthetic process"/>
    <property type="evidence" value="ECO:0007669"/>
    <property type="project" value="UniProtKB-UniRule"/>
</dbReference>
<dbReference type="GO" id="GO:0006744">
    <property type="term" value="P:ubiquinone biosynthetic process"/>
    <property type="evidence" value="ECO:0007669"/>
    <property type="project" value="UniProtKB-UniRule"/>
</dbReference>
<dbReference type="FunFam" id="3.40.1410.10:FF:000002">
    <property type="entry name" value="Chorismate pyruvate-lyase"/>
    <property type="match status" value="1"/>
</dbReference>
<dbReference type="Gene3D" id="3.40.1410.10">
    <property type="entry name" value="Chorismate lyase-like"/>
    <property type="match status" value="1"/>
</dbReference>
<dbReference type="HAMAP" id="MF_01632">
    <property type="entry name" value="UbiC"/>
    <property type="match status" value="1"/>
</dbReference>
<dbReference type="InterPro" id="IPR007440">
    <property type="entry name" value="Chorismate--pyruvate_lyase"/>
</dbReference>
<dbReference type="InterPro" id="IPR028978">
    <property type="entry name" value="Chorismate_lyase_/UTRA_dom_sf"/>
</dbReference>
<dbReference type="NCBIfam" id="NF008656">
    <property type="entry name" value="PRK11655.1"/>
    <property type="match status" value="1"/>
</dbReference>
<dbReference type="PANTHER" id="PTHR38683">
    <property type="entry name" value="CHORISMATE PYRUVATE-LYASE"/>
    <property type="match status" value="1"/>
</dbReference>
<dbReference type="PANTHER" id="PTHR38683:SF1">
    <property type="entry name" value="CHORISMATE PYRUVATE-LYASE"/>
    <property type="match status" value="1"/>
</dbReference>
<dbReference type="Pfam" id="PF04345">
    <property type="entry name" value="Chor_lyase"/>
    <property type="match status" value="1"/>
</dbReference>
<dbReference type="SUPFAM" id="SSF64288">
    <property type="entry name" value="Chorismate lyase-like"/>
    <property type="match status" value="1"/>
</dbReference>
<proteinExistence type="inferred from homology"/>
<sequence>MSHPALTQLRALRYFDAIPALEPHLLDWLLLEDSMTKRFEQQGKRVSVTLIREAFVDQSEVEEASGLLPSESRYWLREILLCADGEPWLAGRTVVPESTLCGPEQVLQHLGKTPLGRYLFTSSTLTRDFIEIGRDATLWGRRSRLRLSGKPLLLTELFLPASPLY</sequence>
<gene>
    <name evidence="1" type="primary">ubiC</name>
    <name type="ordered locus">SG4076</name>
</gene>
<accession>B5R7T2</accession>
<organism>
    <name type="scientific">Salmonella gallinarum (strain 287/91 / NCTC 13346)</name>
    <dbReference type="NCBI Taxonomy" id="550538"/>
    <lineage>
        <taxon>Bacteria</taxon>
        <taxon>Pseudomonadati</taxon>
        <taxon>Pseudomonadota</taxon>
        <taxon>Gammaproteobacteria</taxon>
        <taxon>Enterobacterales</taxon>
        <taxon>Enterobacteriaceae</taxon>
        <taxon>Salmonella</taxon>
    </lineage>
</organism>
<evidence type="ECO:0000255" key="1">
    <source>
        <dbReference type="HAMAP-Rule" id="MF_01632"/>
    </source>
</evidence>
<name>UBIC_SALG2</name>
<keyword id="KW-0963">Cytoplasm</keyword>
<keyword id="KW-0456">Lyase</keyword>
<keyword id="KW-0670">Pyruvate</keyword>
<keyword id="KW-0831">Ubiquinone biosynthesis</keyword>